<dbReference type="EC" id="2.7.11.22"/>
<dbReference type="EMBL" id="BC098838">
    <property type="protein sequence ID" value="AAH98838.1"/>
    <property type="status" value="ALT_SEQ"/>
    <property type="molecule type" value="mRNA"/>
</dbReference>
<dbReference type="RefSeq" id="NP_001020923.2">
    <property type="nucleotide sequence ID" value="NM_001025752.2"/>
</dbReference>
<dbReference type="SMR" id="Q4KM34"/>
<dbReference type="FunCoup" id="Q4KM34">
    <property type="interactions" value="571"/>
</dbReference>
<dbReference type="STRING" id="10116.ENSRNOP00000024466"/>
<dbReference type="GlyGen" id="Q4KM34">
    <property type="glycosylation" value="1 site"/>
</dbReference>
<dbReference type="PhosphoSitePlus" id="Q4KM34"/>
<dbReference type="PaxDb" id="10116-ENSRNOP00000024466"/>
<dbReference type="Ensembl" id="ENSRNOT00000024466.5">
    <property type="protein sequence ID" value="ENSRNOP00000024466.3"/>
    <property type="gene ID" value="ENSRNOG00000017991.6"/>
</dbReference>
<dbReference type="GeneID" id="364666"/>
<dbReference type="KEGG" id="rno:364666"/>
<dbReference type="UCSC" id="RGD:1305219">
    <property type="organism name" value="rat"/>
</dbReference>
<dbReference type="AGR" id="RGD:1305219"/>
<dbReference type="CTD" id="23552"/>
<dbReference type="RGD" id="1305219">
    <property type="gene designation" value="Cdk20"/>
</dbReference>
<dbReference type="eggNOG" id="KOG0659">
    <property type="taxonomic scope" value="Eukaryota"/>
</dbReference>
<dbReference type="GeneTree" id="ENSGT00940000159128"/>
<dbReference type="HOGENOM" id="CLU_000288_181_1_1"/>
<dbReference type="InParanoid" id="Q4KM34"/>
<dbReference type="OMA" id="KITFPYH"/>
<dbReference type="OrthoDB" id="63265at2759"/>
<dbReference type="PhylomeDB" id="Q4KM34"/>
<dbReference type="TreeFam" id="TF327240"/>
<dbReference type="PRO" id="PR:Q4KM34"/>
<dbReference type="Proteomes" id="UP000002494">
    <property type="component" value="Chromosome 17"/>
</dbReference>
<dbReference type="Bgee" id="ENSRNOG00000017991">
    <property type="expression patterns" value="Expressed in skeletal muscle tissue and 20 other cell types or tissues"/>
</dbReference>
<dbReference type="GO" id="GO:0005929">
    <property type="term" value="C:cilium"/>
    <property type="evidence" value="ECO:0007669"/>
    <property type="project" value="UniProtKB-SubCell"/>
</dbReference>
<dbReference type="GO" id="GO:0005737">
    <property type="term" value="C:cytoplasm"/>
    <property type="evidence" value="ECO:0007669"/>
    <property type="project" value="UniProtKB-SubCell"/>
</dbReference>
<dbReference type="GO" id="GO:0005634">
    <property type="term" value="C:nucleus"/>
    <property type="evidence" value="ECO:0000318"/>
    <property type="project" value="GO_Central"/>
</dbReference>
<dbReference type="GO" id="GO:0005524">
    <property type="term" value="F:ATP binding"/>
    <property type="evidence" value="ECO:0007669"/>
    <property type="project" value="UniProtKB-KW"/>
</dbReference>
<dbReference type="GO" id="GO:0004693">
    <property type="term" value="F:cyclin-dependent protein serine/threonine kinase activity"/>
    <property type="evidence" value="ECO:0007669"/>
    <property type="project" value="UniProtKB-EC"/>
</dbReference>
<dbReference type="GO" id="GO:0106310">
    <property type="term" value="F:protein serine kinase activity"/>
    <property type="evidence" value="ECO:0007669"/>
    <property type="project" value="RHEA"/>
</dbReference>
<dbReference type="GO" id="GO:0004674">
    <property type="term" value="F:protein serine/threonine kinase activity"/>
    <property type="evidence" value="ECO:0000318"/>
    <property type="project" value="GO_Central"/>
</dbReference>
<dbReference type="GO" id="GO:0051301">
    <property type="term" value="P:cell division"/>
    <property type="evidence" value="ECO:0007669"/>
    <property type="project" value="UniProtKB-KW"/>
</dbReference>
<dbReference type="GO" id="GO:1990403">
    <property type="term" value="P:embryonic brain development"/>
    <property type="evidence" value="ECO:0000266"/>
    <property type="project" value="RGD"/>
</dbReference>
<dbReference type="GO" id="GO:0031076">
    <property type="term" value="P:embryonic camera-type eye development"/>
    <property type="evidence" value="ECO:0000266"/>
    <property type="project" value="RGD"/>
</dbReference>
<dbReference type="GO" id="GO:0048706">
    <property type="term" value="P:embryonic skeletal system development"/>
    <property type="evidence" value="ECO:0000266"/>
    <property type="project" value="RGD"/>
</dbReference>
<dbReference type="GO" id="GO:0021508">
    <property type="term" value="P:floor plate formation"/>
    <property type="evidence" value="ECO:0000266"/>
    <property type="project" value="RGD"/>
</dbReference>
<dbReference type="GO" id="GO:0045879">
    <property type="term" value="P:negative regulation of smoothened signaling pathway"/>
    <property type="evidence" value="ECO:0000266"/>
    <property type="project" value="RGD"/>
</dbReference>
<dbReference type="GO" id="GO:0001843">
    <property type="term" value="P:neural tube closure"/>
    <property type="evidence" value="ECO:0000266"/>
    <property type="project" value="RGD"/>
</dbReference>
<dbReference type="GO" id="GO:0061512">
    <property type="term" value="P:protein localization to cilium"/>
    <property type="evidence" value="ECO:0000266"/>
    <property type="project" value="RGD"/>
</dbReference>
<dbReference type="GO" id="GO:1903317">
    <property type="term" value="P:regulation of protein maturation"/>
    <property type="evidence" value="ECO:0000266"/>
    <property type="project" value="RGD"/>
</dbReference>
<dbReference type="GO" id="GO:0008589">
    <property type="term" value="P:regulation of smoothened signaling pathway"/>
    <property type="evidence" value="ECO:0000266"/>
    <property type="project" value="RGD"/>
</dbReference>
<dbReference type="GO" id="GO:0060021">
    <property type="term" value="P:roof of mouth development"/>
    <property type="evidence" value="ECO:0000266"/>
    <property type="project" value="RGD"/>
</dbReference>
<dbReference type="CDD" id="cd07832">
    <property type="entry name" value="STKc_CCRK"/>
    <property type="match status" value="1"/>
</dbReference>
<dbReference type="FunFam" id="1.10.510.10:FF:000406">
    <property type="entry name" value="cyclin-dependent kinase 20 isoform X1"/>
    <property type="match status" value="1"/>
</dbReference>
<dbReference type="FunFam" id="3.30.200.20:FF:000211">
    <property type="entry name" value="Putative cyclin-dependent kinase 20"/>
    <property type="match status" value="1"/>
</dbReference>
<dbReference type="Gene3D" id="3.30.200.20">
    <property type="entry name" value="Phosphorylase Kinase, domain 1"/>
    <property type="match status" value="1"/>
</dbReference>
<dbReference type="Gene3D" id="1.10.510.10">
    <property type="entry name" value="Transferase(Phosphotransferase) domain 1"/>
    <property type="match status" value="1"/>
</dbReference>
<dbReference type="InterPro" id="IPR050108">
    <property type="entry name" value="CDK"/>
</dbReference>
<dbReference type="InterPro" id="IPR048002">
    <property type="entry name" value="CDK20-like_STKc"/>
</dbReference>
<dbReference type="InterPro" id="IPR011009">
    <property type="entry name" value="Kinase-like_dom_sf"/>
</dbReference>
<dbReference type="InterPro" id="IPR000719">
    <property type="entry name" value="Prot_kinase_dom"/>
</dbReference>
<dbReference type="InterPro" id="IPR017441">
    <property type="entry name" value="Protein_kinase_ATP_BS"/>
</dbReference>
<dbReference type="InterPro" id="IPR008271">
    <property type="entry name" value="Ser/Thr_kinase_AS"/>
</dbReference>
<dbReference type="PANTHER" id="PTHR24056">
    <property type="entry name" value="CELL DIVISION PROTEIN KINASE"/>
    <property type="match status" value="1"/>
</dbReference>
<dbReference type="PANTHER" id="PTHR24056:SF171">
    <property type="entry name" value="CYCLIN-DEPENDENT KINASE 20"/>
    <property type="match status" value="1"/>
</dbReference>
<dbReference type="Pfam" id="PF00069">
    <property type="entry name" value="Pkinase"/>
    <property type="match status" value="1"/>
</dbReference>
<dbReference type="SMART" id="SM00220">
    <property type="entry name" value="S_TKc"/>
    <property type="match status" value="1"/>
</dbReference>
<dbReference type="SUPFAM" id="SSF56112">
    <property type="entry name" value="Protein kinase-like (PK-like)"/>
    <property type="match status" value="1"/>
</dbReference>
<dbReference type="PROSITE" id="PS00107">
    <property type="entry name" value="PROTEIN_KINASE_ATP"/>
    <property type="match status" value="1"/>
</dbReference>
<dbReference type="PROSITE" id="PS50011">
    <property type="entry name" value="PROTEIN_KINASE_DOM"/>
    <property type="match status" value="1"/>
</dbReference>
<dbReference type="PROSITE" id="PS00108">
    <property type="entry name" value="PROTEIN_KINASE_ST"/>
    <property type="match status" value="1"/>
</dbReference>
<name>CDK20_RAT</name>
<protein>
    <recommendedName>
        <fullName>Cyclin-dependent kinase 20</fullName>
        <ecNumber>2.7.11.22</ecNumber>
    </recommendedName>
    <alternativeName>
        <fullName>Cell cycle-related kinase</fullName>
    </alternativeName>
    <alternativeName>
        <fullName>Cell division protein kinase 20</fullName>
    </alternativeName>
</protein>
<organism>
    <name type="scientific">Rattus norvegicus</name>
    <name type="common">Rat</name>
    <dbReference type="NCBI Taxonomy" id="10116"/>
    <lineage>
        <taxon>Eukaryota</taxon>
        <taxon>Metazoa</taxon>
        <taxon>Chordata</taxon>
        <taxon>Craniata</taxon>
        <taxon>Vertebrata</taxon>
        <taxon>Euteleostomi</taxon>
        <taxon>Mammalia</taxon>
        <taxon>Eutheria</taxon>
        <taxon>Euarchontoglires</taxon>
        <taxon>Glires</taxon>
        <taxon>Rodentia</taxon>
        <taxon>Myomorpha</taxon>
        <taxon>Muroidea</taxon>
        <taxon>Muridae</taxon>
        <taxon>Murinae</taxon>
        <taxon>Rattus</taxon>
    </lineage>
</organism>
<accession>Q4KM34</accession>
<evidence type="ECO:0000250" key="1"/>
<evidence type="ECO:0000255" key="2">
    <source>
        <dbReference type="PROSITE-ProRule" id="PRU00159"/>
    </source>
</evidence>
<evidence type="ECO:0000255" key="3">
    <source>
        <dbReference type="PROSITE-ProRule" id="PRU10027"/>
    </source>
</evidence>
<evidence type="ECO:0000256" key="4">
    <source>
        <dbReference type="SAM" id="MobiDB-lite"/>
    </source>
</evidence>
<evidence type="ECO:0000305" key="5"/>
<keyword id="KW-0067">ATP-binding</keyword>
<keyword id="KW-0131">Cell cycle</keyword>
<keyword id="KW-0132">Cell division</keyword>
<keyword id="KW-0966">Cell projection</keyword>
<keyword id="KW-0969">Cilium</keyword>
<keyword id="KW-0963">Cytoplasm</keyword>
<keyword id="KW-0217">Developmental protein</keyword>
<keyword id="KW-0418">Kinase</keyword>
<keyword id="KW-0547">Nucleotide-binding</keyword>
<keyword id="KW-0539">Nucleus</keyword>
<keyword id="KW-1185">Reference proteome</keyword>
<keyword id="KW-0723">Serine/threonine-protein kinase</keyword>
<keyword id="KW-0808">Transferase</keyword>
<feature type="chain" id="PRO_0000085705" description="Cyclin-dependent kinase 20">
    <location>
        <begin position="1"/>
        <end position="346"/>
    </location>
</feature>
<feature type="domain" description="Protein kinase" evidence="2">
    <location>
        <begin position="4"/>
        <end position="288"/>
    </location>
</feature>
<feature type="region of interest" description="Disordered" evidence="4">
    <location>
        <begin position="298"/>
        <end position="324"/>
    </location>
</feature>
<feature type="compositionally biased region" description="Pro residues" evidence="4">
    <location>
        <begin position="303"/>
        <end position="318"/>
    </location>
</feature>
<feature type="active site" description="Proton acceptor" evidence="2 3">
    <location>
        <position position="127"/>
    </location>
</feature>
<feature type="binding site" evidence="2">
    <location>
        <begin position="10"/>
        <end position="18"/>
    </location>
    <ligand>
        <name>ATP</name>
        <dbReference type="ChEBI" id="CHEBI:30616"/>
    </ligand>
</feature>
<feature type="binding site" evidence="2">
    <location>
        <position position="33"/>
    </location>
    <ligand>
        <name>ATP</name>
        <dbReference type="ChEBI" id="CHEBI:30616"/>
    </ligand>
</feature>
<reference key="1">
    <citation type="journal article" date="2004" name="Genome Res.">
        <title>The status, quality, and expansion of the NIH full-length cDNA project: the Mammalian Gene Collection (MGC).</title>
        <authorList>
            <consortium name="The MGC Project Team"/>
        </authorList>
    </citation>
    <scope>NUCLEOTIDE SEQUENCE [LARGE SCALE MRNA]</scope>
    <source>
        <tissue>Spleen</tissue>
    </source>
</reference>
<comment type="function">
    <text evidence="1">Required for high-level Shh responses in the developing neural tube. Together with TBC1D32, controls the structure of the primary cilium by coordinating assembly of the ciliary membrane and axoneme, allowing GLI2 to be properly activated in response to SHH signaling. Involved in cell growth. Activates CDK2, a kinase involved in the control of the cell cycle, by phosphorylating residue 'Thr-160' (By similarity).</text>
</comment>
<comment type="catalytic activity">
    <reaction>
        <text>L-seryl-[protein] + ATP = O-phospho-L-seryl-[protein] + ADP + H(+)</text>
        <dbReference type="Rhea" id="RHEA:17989"/>
        <dbReference type="Rhea" id="RHEA-COMP:9863"/>
        <dbReference type="Rhea" id="RHEA-COMP:11604"/>
        <dbReference type="ChEBI" id="CHEBI:15378"/>
        <dbReference type="ChEBI" id="CHEBI:29999"/>
        <dbReference type="ChEBI" id="CHEBI:30616"/>
        <dbReference type="ChEBI" id="CHEBI:83421"/>
        <dbReference type="ChEBI" id="CHEBI:456216"/>
        <dbReference type="EC" id="2.7.11.22"/>
    </reaction>
</comment>
<comment type="catalytic activity">
    <reaction>
        <text>L-threonyl-[protein] + ATP = O-phospho-L-threonyl-[protein] + ADP + H(+)</text>
        <dbReference type="Rhea" id="RHEA:46608"/>
        <dbReference type="Rhea" id="RHEA-COMP:11060"/>
        <dbReference type="Rhea" id="RHEA-COMP:11605"/>
        <dbReference type="ChEBI" id="CHEBI:15378"/>
        <dbReference type="ChEBI" id="CHEBI:30013"/>
        <dbReference type="ChEBI" id="CHEBI:30616"/>
        <dbReference type="ChEBI" id="CHEBI:61977"/>
        <dbReference type="ChEBI" id="CHEBI:456216"/>
        <dbReference type="EC" id="2.7.11.22"/>
    </reaction>
</comment>
<comment type="subunit">
    <text evidence="1">Monomer. Interacts with TBC1D32 and MAK.</text>
</comment>
<comment type="subcellular location">
    <subcellularLocation>
        <location evidence="1">Nucleus</location>
    </subcellularLocation>
    <subcellularLocation>
        <location evidence="1">Cytoplasm</location>
    </subcellularLocation>
    <subcellularLocation>
        <location evidence="1">Cell projection</location>
        <location evidence="1">Cilium</location>
    </subcellularLocation>
</comment>
<comment type="similarity">
    <text evidence="5">Belongs to the protein kinase superfamily. CMGC Ser/Thr protein kinase family. CDC2/CDKX subfamily.</text>
</comment>
<comment type="sequence caution" evidence="5">
    <conflict type="miscellaneous discrepancy">
        <sequence resource="EMBL-CDS" id="AAH98838"/>
    </conflict>
    <text>Intron retention.</text>
</comment>
<gene>
    <name type="primary">Cdk20</name>
    <name type="synonym">Ccrk</name>
</gene>
<sequence>MDQYCILGRIGEGAHGIVFKAKHVETGEIVALKKVALRRLEDGIPNQALREIKALQEIEDSQYVVQLKAVFPHGAGFVLAFEFMLSDLAEVVRHAQRPLAPAQVKSYLQMLLKGVAFCHANNIVHRDLKPANLLISASGQLKIADFGLARVFSPDGGRLYTHQVATRWYRAPELLYGARQYDQGVDLWAVGCIMGELLNGSPLFPGENDIEQLCCVLRILGTPSPRVWPEITELPDYNKISFKEQAPVPLEEVLPDASHQALDLLGQFLLYPPRQRIAASQALLHQYFFTAPLPAHPSELPIPQRPGGPTPKAHPGPPHVHDFHVDRPLEESLLNPELIRPFIPEG</sequence>
<proteinExistence type="evidence at transcript level"/>